<comment type="function">
    <text evidence="1">Catalyzes the irreversible beta-carboxylation of phosphoenolpyruvate (PEP) to form oxaloacetate (OAA), a four-carbon dicarboxylic acid source for the tricarboxylic acid cycle.</text>
</comment>
<comment type="catalytic activity">
    <reaction evidence="1">
        <text>oxaloacetate + phosphate = phosphoenolpyruvate + hydrogencarbonate</text>
        <dbReference type="Rhea" id="RHEA:28370"/>
        <dbReference type="ChEBI" id="CHEBI:16452"/>
        <dbReference type="ChEBI" id="CHEBI:17544"/>
        <dbReference type="ChEBI" id="CHEBI:43474"/>
        <dbReference type="ChEBI" id="CHEBI:58702"/>
        <dbReference type="EC" id="4.1.1.31"/>
    </reaction>
</comment>
<comment type="cofactor">
    <cofactor evidence="1">
        <name>Mg(2+)</name>
        <dbReference type="ChEBI" id="CHEBI:18420"/>
    </cofactor>
</comment>
<comment type="subunit">
    <text evidence="1">Homotetramer.</text>
</comment>
<comment type="similarity">
    <text evidence="1">Belongs to the PEPCase type 2 family.</text>
</comment>
<keyword id="KW-0120">Carbon dioxide fixation</keyword>
<keyword id="KW-0456">Lyase</keyword>
<keyword id="KW-0460">Magnesium</keyword>
<evidence type="ECO:0000255" key="1">
    <source>
        <dbReference type="HAMAP-Rule" id="MF_01904"/>
    </source>
</evidence>
<protein>
    <recommendedName>
        <fullName evidence="1">Phosphoenolpyruvate carboxylase</fullName>
        <shortName evidence="1">PEPC</shortName>
        <shortName evidence="1">PEPCase</shortName>
        <ecNumber evidence="1">4.1.1.31</ecNumber>
    </recommendedName>
</protein>
<organism>
    <name type="scientific">Saccharolobus islandicus (strain M.16.4 / Kamchatka #3)</name>
    <name type="common">Sulfolobus islandicus</name>
    <dbReference type="NCBI Taxonomy" id="426118"/>
    <lineage>
        <taxon>Archaea</taxon>
        <taxon>Thermoproteota</taxon>
        <taxon>Thermoprotei</taxon>
        <taxon>Sulfolobales</taxon>
        <taxon>Sulfolobaceae</taxon>
        <taxon>Saccharolobus</taxon>
    </lineage>
</organism>
<accession>C4KJI5</accession>
<dbReference type="EC" id="4.1.1.31" evidence="1"/>
<dbReference type="EMBL" id="CP001402">
    <property type="protein sequence ID" value="ACR40705.1"/>
    <property type="molecule type" value="Genomic_DNA"/>
</dbReference>
<dbReference type="RefSeq" id="WP_012710248.1">
    <property type="nucleotide sequence ID" value="NC_012726.1"/>
</dbReference>
<dbReference type="SMR" id="C4KJI5"/>
<dbReference type="GeneID" id="84060555"/>
<dbReference type="KEGG" id="sid:M164_0069"/>
<dbReference type="HOGENOM" id="CLU_517433_0_0_2"/>
<dbReference type="Proteomes" id="UP000001479">
    <property type="component" value="Chromosome"/>
</dbReference>
<dbReference type="GO" id="GO:0000287">
    <property type="term" value="F:magnesium ion binding"/>
    <property type="evidence" value="ECO:0007669"/>
    <property type="project" value="UniProtKB-UniRule"/>
</dbReference>
<dbReference type="GO" id="GO:0008964">
    <property type="term" value="F:phosphoenolpyruvate carboxylase activity"/>
    <property type="evidence" value="ECO:0007669"/>
    <property type="project" value="UniProtKB-UniRule"/>
</dbReference>
<dbReference type="GO" id="GO:0015977">
    <property type="term" value="P:carbon fixation"/>
    <property type="evidence" value="ECO:0007669"/>
    <property type="project" value="UniProtKB-UniRule"/>
</dbReference>
<dbReference type="GO" id="GO:0006107">
    <property type="term" value="P:oxaloacetate metabolic process"/>
    <property type="evidence" value="ECO:0007669"/>
    <property type="project" value="UniProtKB-UniRule"/>
</dbReference>
<dbReference type="GO" id="GO:0006099">
    <property type="term" value="P:tricarboxylic acid cycle"/>
    <property type="evidence" value="ECO:0007669"/>
    <property type="project" value="InterPro"/>
</dbReference>
<dbReference type="HAMAP" id="MF_01904">
    <property type="entry name" value="PEPcase_type2"/>
    <property type="match status" value="1"/>
</dbReference>
<dbReference type="InterPro" id="IPR007566">
    <property type="entry name" value="PEP_COase_arc-type"/>
</dbReference>
<dbReference type="InterPro" id="IPR015813">
    <property type="entry name" value="Pyrv/PenolPyrv_kinase-like_dom"/>
</dbReference>
<dbReference type="NCBIfam" id="TIGR02751">
    <property type="entry name" value="PEPCase_arch"/>
    <property type="match status" value="1"/>
</dbReference>
<dbReference type="Pfam" id="PF14010">
    <property type="entry name" value="PEPcase_2"/>
    <property type="match status" value="1"/>
</dbReference>
<dbReference type="PIRSF" id="PIRSF006677">
    <property type="entry name" value="UCP006677"/>
    <property type="match status" value="1"/>
</dbReference>
<dbReference type="SUPFAM" id="SSF51621">
    <property type="entry name" value="Phosphoenolpyruvate/pyruvate domain"/>
    <property type="match status" value="1"/>
</dbReference>
<gene>
    <name evidence="1" type="primary">ppcA</name>
    <name type="ordered locus">M164_0069</name>
</gene>
<sequence>MRIIPRTMSTQHPDNAKVPEWAKSEVIEGEDEVKEAFLAYSMYGVHEVMWDAEGKDVDTHVVRKLLSNYPDYFREHILGKDVFLTYRLPNPKVEGADRKVFAETMESIPITYDLAEKFYGNGITVPVFEVILPMTTSNLEIISVARYYEKAVANEDELELYNGVKVKDLVGEIYPKVIEVIPLVEDRDSLQNIDNIVEGYYKVIKPKYMRVFLARSDPAMNYGMITAVLSVKIALSELYKLSESLNFEIYPIIGVGSLPFRGHLSPENYEKVLEEYKGVYTYTIQSAFKYDYDYDKVKSAISSINNSRIGPAKILEKYEEDVLRKITILYTERYQPIIESLANAINDVSVLLPRRRARKLHIGLFGYSRSAGKVSLPRAISFVGSLYSIGIPPELIGISSLSNLDEKEWDIFKQNYVNFKHDLQTAARFFNWESFELIKDIWKISEDTIAKIKEDIDYAESVIGIKLGDIDYDSRKHILMSSLFLLSFKEKILQESKKYLYEMALIRRSLG</sequence>
<name>CAPPA_SACI6</name>
<feature type="chain" id="PRO_1000216172" description="Phosphoenolpyruvate carboxylase">
    <location>
        <begin position="1"/>
        <end position="511"/>
    </location>
</feature>
<proteinExistence type="inferred from homology"/>
<reference key="1">
    <citation type="journal article" date="2009" name="Proc. Natl. Acad. Sci. U.S.A.">
        <title>Biogeography of the Sulfolobus islandicus pan-genome.</title>
        <authorList>
            <person name="Reno M.L."/>
            <person name="Held N.L."/>
            <person name="Fields C.J."/>
            <person name="Burke P.V."/>
            <person name="Whitaker R.J."/>
        </authorList>
    </citation>
    <scope>NUCLEOTIDE SEQUENCE [LARGE SCALE GENOMIC DNA]</scope>
    <source>
        <strain>M.16.4 / Kamchatka #3</strain>
    </source>
</reference>